<proteinExistence type="evidence at protein level"/>
<protein>
    <recommendedName>
        <fullName evidence="3">Protein DEEPER ROOTING 1</fullName>
    </recommendedName>
    <alternativeName>
        <fullName evidence="4">Protein NEGATIVE GRAVITROPIC RESPONSE OF ROOTS 3</fullName>
        <shortName evidence="4">OsNGR3</shortName>
    </alternativeName>
</protein>
<sequence length="251" mass="28547">MKIFSWVANKISGKQEANRFPANSSAPYRANVSDCRKDEFSDWPQSLLAIGTFGNKQIEEVAQVENSSDNVQSVQDTVKFTEEEVDKIRKEFETLLAIKDQAEAQRSHDDDQVGLQKRADGEDNEKHIRQLINKRIIVSKSKNSLGKKGNTLKPRSVASLLKLFMCKGGFTSVVPEPRNTFPQSRMEKLLKAILQKKIHPQNSSTLVAKRHLDWKPDETEINECLEDALRDLDDDGAKWVKTDSEYIVLEM</sequence>
<accession>Q69P88</accession>
<accession>A0A1L2ECA5</accession>
<accession>Q0J1H3</accession>
<comment type="function">
    <text evidence="2">Involved in the control of root growth angle (PubMed:23913002). Involved in cell elongation in the root tip that causes asymmetric root growth and downward bending of the root in response to gravity (PubMed:23913002).</text>
</comment>
<comment type="induction">
    <text evidence="2">Negatively regulated by auxin.</text>
</comment>
<comment type="biotechnology">
    <text evidence="2">Introducing DRO1 into a shallow-rooting rice cultivar enables the resulting line to avoid drought by increasing deep rooting, and to maintain high yield performance under drought conditions.</text>
</comment>
<comment type="miscellaneous">
    <text evidence="2">IR64 cultivar shows shallow rooting in an upland field.</text>
</comment>
<comment type="similarity">
    <text evidence="5">Belongs to the LAZY family.</text>
</comment>
<gene>
    <name evidence="3" type="primary">DRO1</name>
    <name evidence="4" type="synonym">NGR3</name>
    <name evidence="7" type="ordered locus">Os09g0439800</name>
    <name evidence="5" type="ordered locus">LOC_Os09g26840</name>
    <name evidence="6" type="ORF">OJ1344_B01.21</name>
</gene>
<organism>
    <name type="scientific">Oryza sativa subsp. japonica</name>
    <name type="common">Rice</name>
    <dbReference type="NCBI Taxonomy" id="39947"/>
    <lineage>
        <taxon>Eukaryota</taxon>
        <taxon>Viridiplantae</taxon>
        <taxon>Streptophyta</taxon>
        <taxon>Embryophyta</taxon>
        <taxon>Tracheophyta</taxon>
        <taxon>Spermatophyta</taxon>
        <taxon>Magnoliopsida</taxon>
        <taxon>Liliopsida</taxon>
        <taxon>Poales</taxon>
        <taxon>Poaceae</taxon>
        <taxon>BOP clade</taxon>
        <taxon>Oryzoideae</taxon>
        <taxon>Oryzeae</taxon>
        <taxon>Oryzinae</taxon>
        <taxon>Oryza</taxon>
        <taxon>Oryza sativa</taxon>
    </lineage>
</organism>
<evidence type="ECO:0000255" key="1"/>
<evidence type="ECO:0000269" key="2">
    <source>
    </source>
</evidence>
<evidence type="ECO:0000303" key="3">
    <source>
    </source>
</evidence>
<evidence type="ECO:0000303" key="4">
    <source>
    </source>
</evidence>
<evidence type="ECO:0000305" key="5"/>
<evidence type="ECO:0000312" key="6">
    <source>
        <dbReference type="EMBL" id="BAD36146.1"/>
    </source>
</evidence>
<evidence type="ECO:0000312" key="7">
    <source>
        <dbReference type="EMBL" id="BAT08281.1"/>
    </source>
</evidence>
<name>DRO1_ORYSJ</name>
<reference key="1">
    <citation type="journal article" date="2013" name="Nat. Genet.">
        <title>Control of root system architecture by DEEPER ROOTING 1 increases rice yield under drought conditions.</title>
        <authorList>
            <person name="Uga Y."/>
            <person name="Sugimoto K."/>
            <person name="Ogawa S."/>
            <person name="Rane J."/>
            <person name="Ishitani M."/>
            <person name="Hara N."/>
            <person name="Kitomi Y."/>
            <person name="Inukai Y."/>
            <person name="Ono K."/>
            <person name="Kanno N."/>
            <person name="Inoue H."/>
            <person name="Takehisa H."/>
            <person name="Motoyama R."/>
            <person name="Nagamura Y."/>
            <person name="Wu J."/>
            <person name="Matsumoto T."/>
            <person name="Takai T."/>
            <person name="Okuno K."/>
            <person name="Yano M."/>
        </authorList>
    </citation>
    <scope>NUCLEOTIDE SEQUENCE [GENOMIC DNA]</scope>
    <scope>FUNCTION</scope>
    <scope>INDUCTION</scope>
    <scope>BIOTECHNOLOGY</scope>
</reference>
<reference key="2">
    <citation type="journal article" date="2016" name="Nat. Plants">
        <title>Negative gravitropism in plant roots.</title>
        <authorList>
            <person name="Ge L."/>
            <person name="Chen R."/>
        </authorList>
    </citation>
    <scope>NUCLEOTIDE SEQUENCE [MRNA]</scope>
</reference>
<reference key="3">
    <citation type="journal article" date="2005" name="Nature">
        <title>The map-based sequence of the rice genome.</title>
        <authorList>
            <consortium name="International rice genome sequencing project (IRGSP)"/>
        </authorList>
    </citation>
    <scope>NUCLEOTIDE SEQUENCE [LARGE SCALE GENOMIC DNA]</scope>
    <source>
        <strain>cv. Nipponbare</strain>
    </source>
</reference>
<reference key="4">
    <citation type="journal article" date="2008" name="Nucleic Acids Res.">
        <title>The rice annotation project database (RAP-DB): 2008 update.</title>
        <authorList>
            <consortium name="The rice annotation project (RAP)"/>
        </authorList>
    </citation>
    <scope>GENOME REANNOTATION</scope>
    <source>
        <strain>cv. Nipponbare</strain>
    </source>
</reference>
<reference key="5">
    <citation type="journal article" date="2013" name="Rice">
        <title>Improvement of the Oryza sativa Nipponbare reference genome using next generation sequence and optical map data.</title>
        <authorList>
            <person name="Kawahara Y."/>
            <person name="de la Bastide M."/>
            <person name="Hamilton J.P."/>
            <person name="Kanamori H."/>
            <person name="McCombie W.R."/>
            <person name="Ouyang S."/>
            <person name="Schwartz D.C."/>
            <person name="Tanaka T."/>
            <person name="Wu J."/>
            <person name="Zhou S."/>
            <person name="Childs K.L."/>
            <person name="Davidson R.M."/>
            <person name="Lin H."/>
            <person name="Quesada-Ocampo L."/>
            <person name="Vaillancourt B."/>
            <person name="Sakai H."/>
            <person name="Lee S.S."/>
            <person name="Kim J."/>
            <person name="Numa H."/>
            <person name="Itoh T."/>
            <person name="Buell C.R."/>
            <person name="Matsumoto T."/>
        </authorList>
    </citation>
    <scope>GENOME REANNOTATION</scope>
    <source>
        <strain>cv. Nipponbare</strain>
    </source>
</reference>
<keyword id="KW-0175">Coiled coil</keyword>
<keyword id="KW-0341">Growth regulation</keyword>
<keyword id="KW-1185">Reference proteome</keyword>
<feature type="chain" id="PRO_0000451022" description="Protein DEEPER ROOTING 1">
    <location>
        <begin position="1"/>
        <end position="251"/>
    </location>
</feature>
<feature type="coiled-coil region" evidence="1">
    <location>
        <begin position="64"/>
        <end position="105"/>
    </location>
</feature>
<feature type="short sequence motif" description="IGT motif" evidence="5">
    <location>
        <begin position="46"/>
        <end position="52"/>
    </location>
</feature>
<dbReference type="EMBL" id="AB689741">
    <property type="protein sequence ID" value="BAN59747.1"/>
    <property type="molecule type" value="Genomic_DNA"/>
</dbReference>
<dbReference type="EMBL" id="KT021806">
    <property type="protein sequence ID" value="ANJ86433.1"/>
    <property type="molecule type" value="mRNA"/>
</dbReference>
<dbReference type="EMBL" id="AP005570">
    <property type="protein sequence ID" value="BAD36146.1"/>
    <property type="molecule type" value="Genomic_DNA"/>
</dbReference>
<dbReference type="EMBL" id="AP008215">
    <property type="protein sequence ID" value="BAF25192.1"/>
    <property type="molecule type" value="Genomic_DNA"/>
</dbReference>
<dbReference type="EMBL" id="AP014965">
    <property type="protein sequence ID" value="BAT08281.1"/>
    <property type="molecule type" value="Genomic_DNA"/>
</dbReference>
<dbReference type="RefSeq" id="XP_015612544.1">
    <property type="nucleotide sequence ID" value="XM_015757058.1"/>
</dbReference>
<dbReference type="RefSeq" id="XP_015612545.1">
    <property type="nucleotide sequence ID" value="XM_015757059.1"/>
</dbReference>
<dbReference type="SMR" id="Q69P88"/>
<dbReference type="FunCoup" id="Q69P88">
    <property type="interactions" value="28"/>
</dbReference>
<dbReference type="PaxDb" id="39947-Q69P88"/>
<dbReference type="EnsemblPlants" id="Os09t0439800-01">
    <property type="protein sequence ID" value="Os09t0439800-01"/>
    <property type="gene ID" value="Os09g0439800"/>
</dbReference>
<dbReference type="Gramene" id="Os09t0439800-01">
    <property type="protein sequence ID" value="Os09t0439800-01"/>
    <property type="gene ID" value="Os09g0439800"/>
</dbReference>
<dbReference type="KEGG" id="dosa:Os09g0439800"/>
<dbReference type="eggNOG" id="ENOG502SQPJ">
    <property type="taxonomic scope" value="Eukaryota"/>
</dbReference>
<dbReference type="HOGENOM" id="CLU_068790_0_0_1"/>
<dbReference type="InParanoid" id="Q69P88"/>
<dbReference type="OMA" id="NRCELES"/>
<dbReference type="OrthoDB" id="1729737at2759"/>
<dbReference type="Proteomes" id="UP000000763">
    <property type="component" value="Chromosome 9"/>
</dbReference>
<dbReference type="Proteomes" id="UP000059680">
    <property type="component" value="Chromosome 9"/>
</dbReference>
<dbReference type="GO" id="GO:0009958">
    <property type="term" value="P:positive gravitropism"/>
    <property type="evidence" value="ECO:0000315"/>
    <property type="project" value="UniProtKB"/>
</dbReference>
<dbReference type="GO" id="GO:0040008">
    <property type="term" value="P:regulation of growth"/>
    <property type="evidence" value="ECO:0007669"/>
    <property type="project" value="InterPro"/>
</dbReference>
<dbReference type="InterPro" id="IPR044683">
    <property type="entry name" value="LAZY"/>
</dbReference>
<dbReference type="PANTHER" id="PTHR34045">
    <property type="entry name" value="OS03G0406300 PROTEIN"/>
    <property type="match status" value="1"/>
</dbReference>
<dbReference type="PANTHER" id="PTHR34045:SF10">
    <property type="entry name" value="PROTEIN DEEPER ROOTING 1"/>
    <property type="match status" value="1"/>
</dbReference>